<organism>
    <name type="scientific">Bacillus cereus (strain AH820)</name>
    <dbReference type="NCBI Taxonomy" id="405535"/>
    <lineage>
        <taxon>Bacteria</taxon>
        <taxon>Bacillati</taxon>
        <taxon>Bacillota</taxon>
        <taxon>Bacilli</taxon>
        <taxon>Bacillales</taxon>
        <taxon>Bacillaceae</taxon>
        <taxon>Bacillus</taxon>
        <taxon>Bacillus cereus group</taxon>
    </lineage>
</organism>
<proteinExistence type="inferred from homology"/>
<accession>B7JS68</accession>
<feature type="chain" id="PRO_1000199609" description="UPF0354 protein BCAH820_4810">
    <location>
        <begin position="1"/>
        <end position="270"/>
    </location>
</feature>
<dbReference type="EMBL" id="CP001283">
    <property type="protein sequence ID" value="ACK90027.1"/>
    <property type="molecule type" value="Genomic_DNA"/>
</dbReference>
<dbReference type="RefSeq" id="WP_000784591.1">
    <property type="nucleotide sequence ID" value="NC_011773.1"/>
</dbReference>
<dbReference type="KEGG" id="bcu:BCAH820_4810"/>
<dbReference type="HOGENOM" id="CLU_085634_0_0_9"/>
<dbReference type="Proteomes" id="UP000001363">
    <property type="component" value="Chromosome"/>
</dbReference>
<dbReference type="HAMAP" id="MF_01548">
    <property type="entry name" value="UPF0354"/>
    <property type="match status" value="1"/>
</dbReference>
<dbReference type="InterPro" id="IPR010838">
    <property type="entry name" value="DUF1444"/>
</dbReference>
<dbReference type="NCBIfam" id="NF010189">
    <property type="entry name" value="PRK13668.1"/>
    <property type="match status" value="1"/>
</dbReference>
<dbReference type="Pfam" id="PF07285">
    <property type="entry name" value="DUF1444"/>
    <property type="match status" value="1"/>
</dbReference>
<dbReference type="PIRSF" id="PIRSF012562">
    <property type="entry name" value="UCP012562"/>
    <property type="match status" value="1"/>
</dbReference>
<protein>
    <recommendedName>
        <fullName evidence="1">UPF0354 protein BCAH820_4810</fullName>
    </recommendedName>
</protein>
<comment type="similarity">
    <text evidence="1">Belongs to the UPF0354 family.</text>
</comment>
<gene>
    <name type="ordered locus">BCAH820_4810</name>
</gene>
<sequence>MKMTSKKMKDELMKKLSRPEWDFHYDSEKEVLRIEQKDSKKGINVSLPGVVAKWEVNKEKAIEEVAYYVQEALIAMHKEENSAAKILPVIRSTSFPKQAEEGNPFIMTDHTAETRIYYALDSNKTYRLIDERLLKKLGLTEQQVREMALFNARSLGYEFKQDTVAGNTFYFLNTNDGYDATRILNESLLQSMREKISGDMVVAVPHQDVLIIADIVNEIGYDIIAQMTMKFFAEGHVPITSLSFVYEDGDFEPIFILAKNRKKTDGKEKG</sequence>
<reference key="1">
    <citation type="submission" date="2008-10" db="EMBL/GenBank/DDBJ databases">
        <title>Genome sequence of Bacillus cereus AH820.</title>
        <authorList>
            <person name="Dodson R.J."/>
            <person name="Durkin A.S."/>
            <person name="Rosovitz M.J."/>
            <person name="Rasko D.A."/>
            <person name="Hoffmaster A."/>
            <person name="Ravel J."/>
            <person name="Sutton G."/>
        </authorList>
    </citation>
    <scope>NUCLEOTIDE SEQUENCE [LARGE SCALE GENOMIC DNA]</scope>
    <source>
        <strain>AH820</strain>
    </source>
</reference>
<name>Y4810_BACC0</name>
<evidence type="ECO:0000255" key="1">
    <source>
        <dbReference type="HAMAP-Rule" id="MF_01548"/>
    </source>
</evidence>